<keyword id="KW-0488">Methylation</keyword>
<keyword id="KW-0687">Ribonucleoprotein</keyword>
<keyword id="KW-0689">Ribosomal protein</keyword>
<keyword id="KW-0694">RNA-binding</keyword>
<keyword id="KW-0699">rRNA-binding</keyword>
<keyword id="KW-0820">tRNA-binding</keyword>
<reference key="1">
    <citation type="journal article" date="2007" name="PLoS Genet.">
        <title>Patterns and implications of gene gain and loss in the evolution of Prochlorococcus.</title>
        <authorList>
            <person name="Kettler G.C."/>
            <person name="Martiny A.C."/>
            <person name="Huang K."/>
            <person name="Zucker J."/>
            <person name="Coleman M.L."/>
            <person name="Rodrigue S."/>
            <person name="Chen F."/>
            <person name="Lapidus A."/>
            <person name="Ferriera S."/>
            <person name="Johnson J."/>
            <person name="Steglich C."/>
            <person name="Church G.M."/>
            <person name="Richardson P."/>
            <person name="Chisholm S.W."/>
        </authorList>
    </citation>
    <scope>NUCLEOTIDE SEQUENCE [LARGE SCALE GENOMIC DNA]</scope>
    <source>
        <strain>AS9601</strain>
    </source>
</reference>
<dbReference type="EMBL" id="CP000551">
    <property type="protein sequence ID" value="ABM70997.1"/>
    <property type="molecule type" value="Genomic_DNA"/>
</dbReference>
<dbReference type="RefSeq" id="WP_002805703.1">
    <property type="nucleotide sequence ID" value="NC_008816.1"/>
</dbReference>
<dbReference type="SMR" id="A2BT86"/>
<dbReference type="STRING" id="146891.A9601_17141"/>
<dbReference type="KEGG" id="pmb:A9601_17141"/>
<dbReference type="eggNOG" id="COG0048">
    <property type="taxonomic scope" value="Bacteria"/>
</dbReference>
<dbReference type="HOGENOM" id="CLU_104295_1_2_3"/>
<dbReference type="OrthoDB" id="9802366at2"/>
<dbReference type="Proteomes" id="UP000002590">
    <property type="component" value="Chromosome"/>
</dbReference>
<dbReference type="GO" id="GO:0015935">
    <property type="term" value="C:small ribosomal subunit"/>
    <property type="evidence" value="ECO:0007669"/>
    <property type="project" value="InterPro"/>
</dbReference>
<dbReference type="GO" id="GO:0019843">
    <property type="term" value="F:rRNA binding"/>
    <property type="evidence" value="ECO:0007669"/>
    <property type="project" value="UniProtKB-UniRule"/>
</dbReference>
<dbReference type="GO" id="GO:0003735">
    <property type="term" value="F:structural constituent of ribosome"/>
    <property type="evidence" value="ECO:0007669"/>
    <property type="project" value="InterPro"/>
</dbReference>
<dbReference type="GO" id="GO:0000049">
    <property type="term" value="F:tRNA binding"/>
    <property type="evidence" value="ECO:0007669"/>
    <property type="project" value="UniProtKB-UniRule"/>
</dbReference>
<dbReference type="GO" id="GO:0006412">
    <property type="term" value="P:translation"/>
    <property type="evidence" value="ECO:0007669"/>
    <property type="project" value="UniProtKB-UniRule"/>
</dbReference>
<dbReference type="CDD" id="cd03368">
    <property type="entry name" value="Ribosomal_S12"/>
    <property type="match status" value="1"/>
</dbReference>
<dbReference type="FunFam" id="2.40.50.140:FF:000001">
    <property type="entry name" value="30S ribosomal protein S12"/>
    <property type="match status" value="1"/>
</dbReference>
<dbReference type="Gene3D" id="2.40.50.140">
    <property type="entry name" value="Nucleic acid-binding proteins"/>
    <property type="match status" value="1"/>
</dbReference>
<dbReference type="HAMAP" id="MF_00403_B">
    <property type="entry name" value="Ribosomal_uS12_B"/>
    <property type="match status" value="1"/>
</dbReference>
<dbReference type="InterPro" id="IPR012340">
    <property type="entry name" value="NA-bd_OB-fold"/>
</dbReference>
<dbReference type="InterPro" id="IPR006032">
    <property type="entry name" value="Ribosomal_uS12"/>
</dbReference>
<dbReference type="InterPro" id="IPR005679">
    <property type="entry name" value="Ribosomal_uS12_bac"/>
</dbReference>
<dbReference type="NCBIfam" id="TIGR00981">
    <property type="entry name" value="rpsL_bact"/>
    <property type="match status" value="1"/>
</dbReference>
<dbReference type="PANTHER" id="PTHR11652">
    <property type="entry name" value="30S RIBOSOMAL PROTEIN S12 FAMILY MEMBER"/>
    <property type="match status" value="1"/>
</dbReference>
<dbReference type="Pfam" id="PF00164">
    <property type="entry name" value="Ribosom_S12_S23"/>
    <property type="match status" value="1"/>
</dbReference>
<dbReference type="PIRSF" id="PIRSF002133">
    <property type="entry name" value="Ribosomal_S12/S23"/>
    <property type="match status" value="1"/>
</dbReference>
<dbReference type="PRINTS" id="PR01034">
    <property type="entry name" value="RIBOSOMALS12"/>
</dbReference>
<dbReference type="SUPFAM" id="SSF50249">
    <property type="entry name" value="Nucleic acid-binding proteins"/>
    <property type="match status" value="1"/>
</dbReference>
<dbReference type="PROSITE" id="PS00055">
    <property type="entry name" value="RIBOSOMAL_S12"/>
    <property type="match status" value="1"/>
</dbReference>
<name>RS12_PROMS</name>
<comment type="function">
    <text evidence="2">With S4 and S5 plays an important role in translational accuracy.</text>
</comment>
<comment type="function">
    <text evidence="2">Interacts with and stabilizes bases of the 16S rRNA that are involved in tRNA selection in the A site and with the mRNA backbone. Located at the interface of the 30S and 50S subunits, it traverses the body of the 30S subunit contacting proteins on the other side and probably holding the rRNA structure together. The combined cluster of proteins S8, S12 and S17 appears to hold together the shoulder and platform of the 30S subunit.</text>
</comment>
<comment type="subunit">
    <text evidence="2">Part of the 30S ribosomal subunit. Contacts proteins S8 and S17. May interact with IF1 in the 30S initiation complex.</text>
</comment>
<comment type="similarity">
    <text evidence="2">Belongs to the universal ribosomal protein uS12 family.</text>
</comment>
<protein>
    <recommendedName>
        <fullName evidence="2">Small ribosomal subunit protein uS12</fullName>
    </recommendedName>
    <alternativeName>
        <fullName evidence="4">30S ribosomal protein S12</fullName>
    </alternativeName>
</protein>
<accession>A2BT86</accession>
<sequence length="124" mass="13721">MPTISQLVGSERKRLTKKTKSPALKACPERRGVCTRVYTSTPKKPNSALRKVARVRLTSGFEVTAYIPGIGHNLQEHSVVLLRGGRVKDLPGVRYHIIRGTLDTAGVKDRRQSRSKYGAKAPKD</sequence>
<proteinExistence type="inferred from homology"/>
<evidence type="ECO:0000250" key="1"/>
<evidence type="ECO:0000255" key="2">
    <source>
        <dbReference type="HAMAP-Rule" id="MF_00403"/>
    </source>
</evidence>
<evidence type="ECO:0000256" key="3">
    <source>
        <dbReference type="SAM" id="MobiDB-lite"/>
    </source>
</evidence>
<evidence type="ECO:0000305" key="4"/>
<organism>
    <name type="scientific">Prochlorococcus marinus (strain AS9601)</name>
    <dbReference type="NCBI Taxonomy" id="146891"/>
    <lineage>
        <taxon>Bacteria</taxon>
        <taxon>Bacillati</taxon>
        <taxon>Cyanobacteriota</taxon>
        <taxon>Cyanophyceae</taxon>
        <taxon>Synechococcales</taxon>
        <taxon>Prochlorococcaceae</taxon>
        <taxon>Prochlorococcus</taxon>
    </lineage>
</organism>
<gene>
    <name evidence="2" type="primary">rpsL</name>
    <name evidence="2" type="synonym">rps12</name>
    <name type="ordered locus">A9601_17141</name>
</gene>
<feature type="chain" id="PRO_0000296013" description="Small ribosomal subunit protein uS12">
    <location>
        <begin position="1"/>
        <end position="124"/>
    </location>
</feature>
<feature type="region of interest" description="Disordered" evidence="3">
    <location>
        <begin position="1"/>
        <end position="26"/>
    </location>
</feature>
<feature type="region of interest" description="Disordered" evidence="3">
    <location>
        <begin position="104"/>
        <end position="124"/>
    </location>
</feature>
<feature type="modified residue" description="3-methylthioaspartic acid" evidence="1">
    <location>
        <position position="89"/>
    </location>
</feature>